<organism>
    <name type="scientific">Pan troglodytes</name>
    <name type="common">Chimpanzee</name>
    <dbReference type="NCBI Taxonomy" id="9598"/>
    <lineage>
        <taxon>Eukaryota</taxon>
        <taxon>Metazoa</taxon>
        <taxon>Chordata</taxon>
        <taxon>Craniata</taxon>
        <taxon>Vertebrata</taxon>
        <taxon>Euteleostomi</taxon>
        <taxon>Mammalia</taxon>
        <taxon>Eutheria</taxon>
        <taxon>Euarchontoglires</taxon>
        <taxon>Primates</taxon>
        <taxon>Haplorrhini</taxon>
        <taxon>Catarrhini</taxon>
        <taxon>Hominidae</taxon>
        <taxon>Pan</taxon>
    </lineage>
</organism>
<name>APOA2_PANTR</name>
<feature type="signal peptide" evidence="1">
    <location>
        <begin position="1"/>
        <end position="18"/>
    </location>
</feature>
<feature type="chain" id="PRO_0000425358" description="Proapolipoprotein A-II">
    <location>
        <begin position="19"/>
        <end position="100"/>
    </location>
</feature>
<feature type="chain" id="PRO_0000002010" description="Apolipoprotein A-II" evidence="5">
    <location>
        <begin position="24"/>
        <end position="100"/>
    </location>
</feature>
<feature type="chain" id="PRO_0000416582" description="Truncated apolipoprotein A-II" evidence="5">
    <location>
        <begin position="24"/>
        <end position="99"/>
    </location>
</feature>
<feature type="modified residue" description="Methionine sulfoxide" evidence="2">
    <location>
        <position position="49"/>
    </location>
</feature>
<feature type="modified residue" description="Phosphoserine" evidence="2">
    <location>
        <position position="54"/>
    </location>
</feature>
<feature type="modified residue" description="Phosphoserine" evidence="2">
    <location>
        <position position="68"/>
    </location>
</feature>
<accession>Q8MIQ5</accession>
<proteinExistence type="evidence at protein level"/>
<comment type="function">
    <text>May stabilize HDL (high density lipoprotein) structure by its association with lipids, and affect the HDL metabolism.</text>
</comment>
<comment type="subunit">
    <text evidence="2 3">Homodimer; disulfide-linked (PubMed:21298813). Interacts with NAXE and NDRG1 (By similarity).</text>
</comment>
<comment type="subcellular location">
    <subcellularLocation>
        <location evidence="2">Secreted</location>
    </subcellularLocation>
</comment>
<comment type="tissue specificity">
    <text>Plasma.</text>
</comment>
<comment type="mass spectrometry" mass="17469.7" error="1.15" method="Electrospray" evidence="3">
    <molecule>Apolipoprotein A-II</molecule>
    <text>Homodimer.</text>
</comment>
<comment type="mass spectrometry" mass="17342.0" method="Electrospray" evidence="3">
    <molecule>Truncated apolipoprotein A-II</molecule>
    <text>Homodimer.</text>
</comment>
<comment type="similarity">
    <text evidence="4">Belongs to the apolipoprotein A2 family.</text>
</comment>
<keyword id="KW-0165">Cleavage on pair of basic residues</keyword>
<keyword id="KW-1015">Disulfide bond</keyword>
<keyword id="KW-0345">HDL</keyword>
<keyword id="KW-0445">Lipid transport</keyword>
<keyword id="KW-0558">Oxidation</keyword>
<keyword id="KW-0597">Phosphoprotein</keyword>
<keyword id="KW-1185">Reference proteome</keyword>
<keyword id="KW-0964">Secreted</keyword>
<keyword id="KW-0732">Signal</keyword>
<keyword id="KW-0813">Transport</keyword>
<protein>
    <recommendedName>
        <fullName>Apolipoprotein A-II</fullName>
        <shortName>Apo-AII</shortName>
        <shortName>ApoA-II</shortName>
    </recommendedName>
    <alternativeName>
        <fullName>Apolipoprotein A2</fullName>
    </alternativeName>
    <component>
        <recommendedName>
            <fullName>Proapolipoprotein A-II</fullName>
            <shortName>ProapoA-II</shortName>
        </recommendedName>
    </component>
    <component>
        <recommendedName>
            <fullName>Truncated apolipoprotein A-II</fullName>
        </recommendedName>
    </component>
</protein>
<sequence length="100" mass="11220">MKLLAATVLLLTICSLEGALVRRQAKEPCVDNLVSQYFQTVTDYGKDLMEKVKSPELQAEAKSYFEKSKEQLTPLIKKAGTELVNFLSYFMELGTQPATQ</sequence>
<evidence type="ECO:0000250" key="1"/>
<evidence type="ECO:0000250" key="2">
    <source>
        <dbReference type="UniProtKB" id="P02652"/>
    </source>
</evidence>
<evidence type="ECO:0000269" key="3">
    <source>
    </source>
</evidence>
<evidence type="ECO:0000305" key="4"/>
<evidence type="ECO:0000305" key="5">
    <source>
    </source>
</evidence>
<reference key="1">
    <citation type="journal article" date="2002" name="Hum. Genet.">
        <title>Sequence polymorphism at the human apolipoprotein AII gene (APOA2): unexpected deficit of variation in an African-American sample.</title>
        <authorList>
            <person name="Fullerton S.M."/>
            <person name="Clark A.G."/>
            <person name="Weiss K.M."/>
            <person name="Taylor S.L."/>
            <person name="Stengard J.H."/>
            <person name="Salomaa V."/>
            <person name="Boerwinkle E."/>
            <person name="Nickerson D.A."/>
        </authorList>
    </citation>
    <scope>NUCLEOTIDE SEQUENCE [GENOMIC DNA]</scope>
</reference>
<reference key="2">
    <citation type="journal article" date="2009" name="Comp. Biochem. Physiol.">
        <title>Mass spectral analyses of the two major apolipoproteins of great ape high density lipoproteins.</title>
        <authorList>
            <person name="Puppione D.L."/>
            <person name="Della Donna L."/>
            <person name="Laganowsky A.D."/>
            <person name="Bassilian S."/>
            <person name="Souda P."/>
            <person name="Ryder O.A."/>
            <person name="Whitelegge J.P."/>
        </authorList>
    </citation>
    <scope>MASS SPECTROMETRY</scope>
    <scope>SUBUNIT</scope>
</reference>
<gene>
    <name type="primary">APOA2</name>
</gene>
<dbReference type="EMBL" id="AY100525">
    <property type="protein sequence ID" value="AAM49808.1"/>
    <property type="molecule type" value="Genomic_DNA"/>
</dbReference>
<dbReference type="RefSeq" id="NP_001008976.1">
    <property type="nucleotide sequence ID" value="NM_001008976.1"/>
</dbReference>
<dbReference type="RefSeq" id="XP_009431992.4">
    <property type="nucleotide sequence ID" value="XM_009433717.5"/>
</dbReference>
<dbReference type="SMR" id="Q8MIQ5"/>
<dbReference type="FunCoup" id="Q8MIQ5">
    <property type="interactions" value="336"/>
</dbReference>
<dbReference type="STRING" id="9598.ENSPTRP00000069102"/>
<dbReference type="PaxDb" id="9598-ENSPTRP00000002645"/>
<dbReference type="Ensembl" id="ENSPTRT00000002882.2">
    <property type="protein sequence ID" value="ENSPTRP00000002645.2"/>
    <property type="gene ID" value="ENSPTRG00000001580.5"/>
</dbReference>
<dbReference type="GeneID" id="449498"/>
<dbReference type="KEGG" id="ptr:449498"/>
<dbReference type="CTD" id="336"/>
<dbReference type="VGNC" id="VGNC:8240">
    <property type="gene designation" value="APOA2"/>
</dbReference>
<dbReference type="eggNOG" id="ENOG502SVYZ">
    <property type="taxonomic scope" value="Eukaryota"/>
</dbReference>
<dbReference type="GeneTree" id="ENSGT00390000003306"/>
<dbReference type="InParanoid" id="Q8MIQ5"/>
<dbReference type="OMA" id="LTICSFE"/>
<dbReference type="Proteomes" id="UP000002277">
    <property type="component" value="Chromosome 1"/>
</dbReference>
<dbReference type="Bgee" id="ENSPTRG00000001580">
    <property type="expression patterns" value="Expressed in liver and 12 other cell types or tissues"/>
</dbReference>
<dbReference type="GO" id="GO:0034366">
    <property type="term" value="C:spherical high-density lipoprotein particle"/>
    <property type="evidence" value="ECO:0000318"/>
    <property type="project" value="GO_Central"/>
</dbReference>
<dbReference type="GO" id="GO:0008035">
    <property type="term" value="F:high-density lipoprotein particle binding"/>
    <property type="evidence" value="ECO:0000318"/>
    <property type="project" value="GO_Central"/>
</dbReference>
<dbReference type="GO" id="GO:0008289">
    <property type="term" value="F:lipid binding"/>
    <property type="evidence" value="ECO:0007669"/>
    <property type="project" value="InterPro"/>
</dbReference>
<dbReference type="GO" id="GO:0046982">
    <property type="term" value="F:protein heterodimerization activity"/>
    <property type="evidence" value="ECO:0000250"/>
    <property type="project" value="UniProtKB"/>
</dbReference>
<dbReference type="GO" id="GO:0042632">
    <property type="term" value="P:cholesterol homeostasis"/>
    <property type="evidence" value="ECO:0000318"/>
    <property type="project" value="GO_Central"/>
</dbReference>
<dbReference type="GO" id="GO:0030301">
    <property type="term" value="P:cholesterol transport"/>
    <property type="evidence" value="ECO:0000318"/>
    <property type="project" value="GO_Central"/>
</dbReference>
<dbReference type="GO" id="GO:0042157">
    <property type="term" value="P:lipoprotein metabolic process"/>
    <property type="evidence" value="ECO:0007669"/>
    <property type="project" value="InterPro"/>
</dbReference>
<dbReference type="GO" id="GO:0018206">
    <property type="term" value="P:peptidyl-methionine modification"/>
    <property type="evidence" value="ECO:0000250"/>
    <property type="project" value="UniProtKB"/>
</dbReference>
<dbReference type="GO" id="GO:0032757">
    <property type="term" value="P:positive regulation of interleukin-8 production"/>
    <property type="evidence" value="ECO:0000250"/>
    <property type="project" value="UniProtKB"/>
</dbReference>
<dbReference type="GO" id="GO:0050766">
    <property type="term" value="P:positive regulation of phagocytosis"/>
    <property type="evidence" value="ECO:0000250"/>
    <property type="project" value="UniProtKB"/>
</dbReference>
<dbReference type="GO" id="GO:0018158">
    <property type="term" value="P:protein oxidation"/>
    <property type="evidence" value="ECO:0000250"/>
    <property type="project" value="UniProtKB"/>
</dbReference>
<dbReference type="GO" id="GO:0050821">
    <property type="term" value="P:protein stabilization"/>
    <property type="evidence" value="ECO:0000250"/>
    <property type="project" value="UniProtKB"/>
</dbReference>
<dbReference type="Gene3D" id="6.10.250.100">
    <property type="match status" value="1"/>
</dbReference>
<dbReference type="InterPro" id="IPR006801">
    <property type="entry name" value="ApoA-II"/>
</dbReference>
<dbReference type="InterPro" id="IPR036172">
    <property type="entry name" value="ApoA-II_sf"/>
</dbReference>
<dbReference type="PANTHER" id="PTHR11027">
    <property type="entry name" value="APOLIPOPROTEIN A-II"/>
    <property type="match status" value="1"/>
</dbReference>
<dbReference type="PANTHER" id="PTHR11027:SF0">
    <property type="entry name" value="APOLIPOPROTEIN A-II"/>
    <property type="match status" value="1"/>
</dbReference>
<dbReference type="Pfam" id="PF04711">
    <property type="entry name" value="ApoA-II"/>
    <property type="match status" value="1"/>
</dbReference>
<dbReference type="SUPFAM" id="SSF82936">
    <property type="entry name" value="Apolipoprotein A-II"/>
    <property type="match status" value="1"/>
</dbReference>